<evidence type="ECO:0000255" key="1">
    <source>
        <dbReference type="HAMAP-Rule" id="MF_00385"/>
    </source>
</evidence>
<evidence type="ECO:0000305" key="2"/>
<dbReference type="EMBL" id="CP000444">
    <property type="protein sequence ID" value="ABI43904.1"/>
    <property type="molecule type" value="Genomic_DNA"/>
</dbReference>
<dbReference type="SMR" id="Q0HSK1"/>
<dbReference type="KEGG" id="shm:Shewmr7_2920"/>
<dbReference type="HOGENOM" id="CLU_100590_5_1_6"/>
<dbReference type="GO" id="GO:0005737">
    <property type="term" value="C:cytoplasm"/>
    <property type="evidence" value="ECO:0007669"/>
    <property type="project" value="UniProtKB-ARBA"/>
</dbReference>
<dbReference type="GO" id="GO:0015935">
    <property type="term" value="C:small ribosomal subunit"/>
    <property type="evidence" value="ECO:0007669"/>
    <property type="project" value="TreeGrafter"/>
</dbReference>
<dbReference type="GO" id="GO:0003735">
    <property type="term" value="F:structural constituent of ribosome"/>
    <property type="evidence" value="ECO:0007669"/>
    <property type="project" value="InterPro"/>
</dbReference>
<dbReference type="GO" id="GO:0006412">
    <property type="term" value="P:translation"/>
    <property type="evidence" value="ECO:0007669"/>
    <property type="project" value="UniProtKB-UniRule"/>
</dbReference>
<dbReference type="FunFam" id="3.30.1320.10:FF:000001">
    <property type="entry name" value="30S ribosomal protein S16"/>
    <property type="match status" value="1"/>
</dbReference>
<dbReference type="Gene3D" id="3.30.1320.10">
    <property type="match status" value="1"/>
</dbReference>
<dbReference type="HAMAP" id="MF_00385">
    <property type="entry name" value="Ribosomal_bS16"/>
    <property type="match status" value="1"/>
</dbReference>
<dbReference type="InterPro" id="IPR000307">
    <property type="entry name" value="Ribosomal_bS16"/>
</dbReference>
<dbReference type="InterPro" id="IPR020592">
    <property type="entry name" value="Ribosomal_bS16_CS"/>
</dbReference>
<dbReference type="InterPro" id="IPR023803">
    <property type="entry name" value="Ribosomal_bS16_dom_sf"/>
</dbReference>
<dbReference type="NCBIfam" id="TIGR00002">
    <property type="entry name" value="S16"/>
    <property type="match status" value="1"/>
</dbReference>
<dbReference type="PANTHER" id="PTHR12919">
    <property type="entry name" value="30S RIBOSOMAL PROTEIN S16"/>
    <property type="match status" value="1"/>
</dbReference>
<dbReference type="PANTHER" id="PTHR12919:SF20">
    <property type="entry name" value="SMALL RIBOSOMAL SUBUNIT PROTEIN BS16M"/>
    <property type="match status" value="1"/>
</dbReference>
<dbReference type="Pfam" id="PF00886">
    <property type="entry name" value="Ribosomal_S16"/>
    <property type="match status" value="1"/>
</dbReference>
<dbReference type="SUPFAM" id="SSF54565">
    <property type="entry name" value="Ribosomal protein S16"/>
    <property type="match status" value="1"/>
</dbReference>
<dbReference type="PROSITE" id="PS00732">
    <property type="entry name" value="RIBOSOMAL_S16"/>
    <property type="match status" value="1"/>
</dbReference>
<protein>
    <recommendedName>
        <fullName evidence="1">Small ribosomal subunit protein bS16</fullName>
    </recommendedName>
    <alternativeName>
        <fullName evidence="2">30S ribosomal protein S16</fullName>
    </alternativeName>
</protein>
<sequence>MVTIRLARGGAKKRPFYNIVVADSRNARDGRFIERVGFFNPLARGQEETLRLDLARVEHWVSNGAATTDRVAKLIKDAKAAA</sequence>
<reference key="1">
    <citation type="submission" date="2006-08" db="EMBL/GenBank/DDBJ databases">
        <title>Complete sequence of chromosome 1 of Shewanella sp. MR-7.</title>
        <authorList>
            <person name="Copeland A."/>
            <person name="Lucas S."/>
            <person name="Lapidus A."/>
            <person name="Barry K."/>
            <person name="Detter J.C."/>
            <person name="Glavina del Rio T."/>
            <person name="Hammon N."/>
            <person name="Israni S."/>
            <person name="Dalin E."/>
            <person name="Tice H."/>
            <person name="Pitluck S."/>
            <person name="Kiss H."/>
            <person name="Brettin T."/>
            <person name="Bruce D."/>
            <person name="Han C."/>
            <person name="Tapia R."/>
            <person name="Gilna P."/>
            <person name="Schmutz J."/>
            <person name="Larimer F."/>
            <person name="Land M."/>
            <person name="Hauser L."/>
            <person name="Kyrpides N."/>
            <person name="Mikhailova N."/>
            <person name="Nealson K."/>
            <person name="Konstantinidis K."/>
            <person name="Klappenbach J."/>
            <person name="Tiedje J."/>
            <person name="Richardson P."/>
        </authorList>
    </citation>
    <scope>NUCLEOTIDE SEQUENCE [LARGE SCALE GENOMIC DNA]</scope>
    <source>
        <strain>MR-7</strain>
    </source>
</reference>
<comment type="similarity">
    <text evidence="1">Belongs to the bacterial ribosomal protein bS16 family.</text>
</comment>
<name>RS16_SHESR</name>
<keyword id="KW-0687">Ribonucleoprotein</keyword>
<keyword id="KW-0689">Ribosomal protein</keyword>
<accession>Q0HSK1</accession>
<proteinExistence type="inferred from homology"/>
<gene>
    <name evidence="1" type="primary">rpsP</name>
    <name type="ordered locus">Shewmr7_2920</name>
</gene>
<organism>
    <name type="scientific">Shewanella sp. (strain MR-7)</name>
    <dbReference type="NCBI Taxonomy" id="60481"/>
    <lineage>
        <taxon>Bacteria</taxon>
        <taxon>Pseudomonadati</taxon>
        <taxon>Pseudomonadota</taxon>
        <taxon>Gammaproteobacteria</taxon>
        <taxon>Alteromonadales</taxon>
        <taxon>Shewanellaceae</taxon>
        <taxon>Shewanella</taxon>
    </lineage>
</organism>
<feature type="chain" id="PRO_1000049351" description="Small ribosomal subunit protein bS16">
    <location>
        <begin position="1"/>
        <end position="82"/>
    </location>
</feature>